<proteinExistence type="evidence at protein level"/>
<sequence length="1489" mass="169632">MDVNWMDDDEDLVAALAMHEEQKSEDADGTRWEHCDEACDGFDMATGHNWIYPNNLPLRSYQQTIVQSALFKNTLVVLPTGLGKTFIAAVVMYNFYRWYPKGKIVFMAPTRPLVSQQIHASQKIMPFPSEDTVQLTGQLPRPKRAELWASKRVFFATPQVVHSDMLEADGECSFPFGSIKLIVVDEAHRAKGRYAYTQVADCLMARNRYFRMLALSATPGRTMEDVAAVCRNLYISNLQVRWDTSIDVQPYIHRRTIRTIVVSLKERIKEPRERLLQIIEPYLRQLMEAEIFKGNKGTVSRNSLLFEQKSFVERSAQGQRHPDHNIIMGNFAMCISMYHSLDLMERHGLRVFVNNFDADDDGREKFVLARDGNLRNLVEQVRQELGANPLDYTTHAMTNGEVPPLPSDLDFGHAKYEKLRQVLVQHFQANPDSRAIVFCEYRESVMLIHRLLLQHRPVLRPRCFVGQGSTVGASYALTQKQQLQIMTDFRSGTSNVLVATSIGEEGLDVGEVEMIVCFDICSTNPTRFIQRIGRTGRKKNGEVVMLVTEGREQQVLKDVLANKDQINKKLLNSSVVKLSLYEQNPRMVPSKFQPKCEEKHMEPVAEEKPKPKSAAKTKESRKRKQPVAQTGSLRKYFKESPPTESQQGILQGIKPYQMSEASQQLVKQQVLRRSVTLKNFFGESQASSTLTSSQEDVQRLRKLTRLLQSSKPFVSDSKDLMSHLQDDHLPRQIKLYLLKSNPEFLRETHLKMQVQSELNIADDRLNSRQRRTKNNYQLLLDICDGMDQMNELLQGDNSGAEISFRDELNPIYNQSPKKFDTICEQIFDGLNEHGLNSNNFELKQDLLEKLELRNLETTVNEQLGGIEASWSEEEWDQQEEDVKFESMYLSQQLNLPDANVVPHSSTPLRVKPLSKLMFKTLQGDIEEEYHSGMEASELGDNLGRLNSLMNASESKIKATERIAPIPVVDSTIETNHFPAVEESQRSTPISIADSSGESNHCAVNKNSEIYPMSIDETKVEVKSSLNLKMHAESIVEDLDIDLDDFLEPMDKELELASQTKGKSQENIVDHQMEKLEKNCEQKETAHNNDLDLTDEDLKEFLEPMVEEVELMSQKKANDFKDFLEPMPEELELMSQQKKNILLPSTETIKNSENKNSHEDGSRTVSPDIFGSDSMSPLKPQGKSLAAKLAAKAAAKVLPCPPPNSVGLNSPENRKRTNPSIQEKSPSIFDLYLNRMRGRGRLAKAAENLHRITSTNPTISVPKDEEDSPIARRPSKRKIVISSDEEEEQKPQIAETQVDCESDDYERILDTQMPDPRKTPTRPRHKRSKFNSFILDEAEKSGSDHEEEGETTIGTYLKDSMIVSSDDEDHNDTNTHAIYLRALKSPIQRPGAFKMPPPRVFRDESHIFSQPVEDDSSQYMQCSFIVDDESSTIERGHDVSECPLEKAERILKERRKQRRLGKVPSAPVNKRRRLQTISTSSDEDDVVLID</sequence>
<gene>
    <name evidence="9" type="primary">Fancm</name>
    <name evidence="9" type="ORF">CG7922</name>
</gene>
<protein>
    <recommendedName>
        <fullName evidence="7">DEAD-box ATP-dependent DNA helicase Fancm</fullName>
        <ecNumber evidence="6">5.6.2.4</ecNumber>
    </recommendedName>
    <alternativeName>
        <fullName evidence="7">Fanconi anemia group M protein homolog</fullName>
        <shortName evidence="7">Protein FACM homolog</shortName>
    </alternativeName>
</protein>
<comment type="function">
    <text evidence="5 6">A ssDNA-dependent ATPase with 3' to 5' helicase activity (PubMed:27466228). Involved in multiple DNA-damage responses, some that require ATPase and helicase activity and some that are independent of these (PubMed:27466228). Involved in DNA interstrand cross-link repair, probably together with Fancl and other Fanconi anemia pathway homologs (PubMed:25205745). Independent of Fancl involved in DNA double strand break repair, including contributing to the synthesis-dependent strand annealing (SDSA) pathway (PubMed:25205745). Probably contributes to SDSA by unwinding short duplex regions in complex D-loop-like DNA structures (PubMed:27466228).</text>
</comment>
<comment type="catalytic activity">
    <reaction evidence="6">
        <text>ATP + H2O = ADP + phosphate + H(+)</text>
        <dbReference type="Rhea" id="RHEA:13065"/>
        <dbReference type="ChEBI" id="CHEBI:15377"/>
        <dbReference type="ChEBI" id="CHEBI:15378"/>
        <dbReference type="ChEBI" id="CHEBI:30616"/>
        <dbReference type="ChEBI" id="CHEBI:43474"/>
        <dbReference type="ChEBI" id="CHEBI:456216"/>
        <dbReference type="EC" id="5.6.2.4"/>
    </reaction>
</comment>
<comment type="catalytic activity">
    <reaction evidence="6">
        <text>Couples ATP hydrolysis with the unwinding of duplex DNA by translocating in the 3'-5' direction.</text>
        <dbReference type="EC" id="5.6.2.4"/>
    </reaction>
</comment>
<comment type="subcellular location">
    <subcellularLocation>
        <location evidence="1">Nucleus</location>
    </subcellularLocation>
</comment>
<comment type="disruption phenotype">
    <text evidence="5 6">Increased incidence of spontaneous mitotic crossovers (PubMed:25205745, PubMed:27466228). Increased sensitivity to DNA damage caused by the cross linking agent nitrogen mustard mechlorethamine (HN2), the alkylating agent methyl methanesulfonate (MMS), and double-strand break inducing ionizing radiation (IR) (PubMed:25205745, PubMed:27466228).</text>
</comment>
<comment type="similarity">
    <text evidence="7">Belongs to the DEAD box helicase family. DEAH subfamily. FANCM sub-subfamily.</text>
</comment>
<comment type="sequence caution" evidence="7">
    <conflict type="erroneous initiation">
        <sequence resource="EMBL-CDS" id="AGL96297"/>
    </conflict>
    <text>Extended N-terminus.</text>
</comment>
<keyword id="KW-0067">ATP-binding</keyword>
<keyword id="KW-0227">DNA damage</keyword>
<keyword id="KW-0234">DNA repair</keyword>
<keyword id="KW-0347">Helicase</keyword>
<keyword id="KW-0378">Hydrolase</keyword>
<keyword id="KW-0413">Isomerase</keyword>
<keyword id="KW-0547">Nucleotide-binding</keyword>
<keyword id="KW-0539">Nucleus</keyword>
<keyword id="KW-1185">Reference proteome</keyword>
<evidence type="ECO:0000250" key="1">
    <source>
        <dbReference type="UniProtKB" id="Q8IYD8"/>
    </source>
</evidence>
<evidence type="ECO:0000255" key="2">
    <source>
        <dbReference type="PROSITE-ProRule" id="PRU00541"/>
    </source>
</evidence>
<evidence type="ECO:0000255" key="3">
    <source>
        <dbReference type="PROSITE-ProRule" id="PRU00542"/>
    </source>
</evidence>
<evidence type="ECO:0000256" key="4">
    <source>
        <dbReference type="SAM" id="MobiDB-lite"/>
    </source>
</evidence>
<evidence type="ECO:0000269" key="5">
    <source>
    </source>
</evidence>
<evidence type="ECO:0000269" key="6">
    <source>
    </source>
</evidence>
<evidence type="ECO:0000305" key="7"/>
<evidence type="ECO:0000312" key="8">
    <source>
        <dbReference type="EMBL" id="AGL96297.1"/>
    </source>
</evidence>
<evidence type="ECO:0000312" key="9">
    <source>
        <dbReference type="FlyBase" id="FBgn0038889"/>
    </source>
</evidence>
<evidence type="ECO:0000312" key="10">
    <source>
        <dbReference type="Proteomes" id="UP000000803"/>
    </source>
</evidence>
<organism evidence="10">
    <name type="scientific">Drosophila melanogaster</name>
    <name type="common">Fruit fly</name>
    <dbReference type="NCBI Taxonomy" id="7227"/>
    <lineage>
        <taxon>Eukaryota</taxon>
        <taxon>Metazoa</taxon>
        <taxon>Ecdysozoa</taxon>
        <taxon>Arthropoda</taxon>
        <taxon>Hexapoda</taxon>
        <taxon>Insecta</taxon>
        <taxon>Pterygota</taxon>
        <taxon>Neoptera</taxon>
        <taxon>Endopterygota</taxon>
        <taxon>Diptera</taxon>
        <taxon>Brachycera</taxon>
        <taxon>Muscomorpha</taxon>
        <taxon>Ephydroidea</taxon>
        <taxon>Drosophilidae</taxon>
        <taxon>Drosophila</taxon>
        <taxon>Sophophora</taxon>
    </lineage>
</organism>
<name>FANCM_DROME</name>
<feature type="chain" id="PRO_0000458963" description="DEAD-box ATP-dependent DNA helicase Fancm">
    <location>
        <begin position="1"/>
        <end position="1489"/>
    </location>
</feature>
<feature type="domain" description="Helicase ATP-binding" evidence="2">
    <location>
        <begin position="65"/>
        <end position="237"/>
    </location>
</feature>
<feature type="domain" description="Helicase C-terminal" evidence="3">
    <location>
        <begin position="418"/>
        <end position="584"/>
    </location>
</feature>
<feature type="region of interest" description="Disordered" evidence="4">
    <location>
        <begin position="591"/>
        <end position="647"/>
    </location>
</feature>
<feature type="region of interest" description="Disordered" evidence="4">
    <location>
        <begin position="980"/>
        <end position="1000"/>
    </location>
</feature>
<feature type="region of interest" description="Disordered" evidence="4">
    <location>
        <begin position="1145"/>
        <end position="1182"/>
    </location>
</feature>
<feature type="region of interest" description="Disordered" evidence="4">
    <location>
        <begin position="1196"/>
        <end position="1222"/>
    </location>
</feature>
<feature type="region of interest" description="Disordered" evidence="4">
    <location>
        <begin position="1255"/>
        <end position="1293"/>
    </location>
</feature>
<feature type="region of interest" description="Disordered" evidence="4">
    <location>
        <begin position="1452"/>
        <end position="1489"/>
    </location>
</feature>
<feature type="short sequence motif" description="DEAH box" evidence="2">
    <location>
        <begin position="185"/>
        <end position="188"/>
    </location>
</feature>
<feature type="compositionally biased region" description="Basic and acidic residues" evidence="4">
    <location>
        <begin position="594"/>
        <end position="610"/>
    </location>
</feature>
<feature type="compositionally biased region" description="Basic residues" evidence="4">
    <location>
        <begin position="611"/>
        <end position="625"/>
    </location>
</feature>
<feature type="compositionally biased region" description="Polar residues" evidence="4">
    <location>
        <begin position="985"/>
        <end position="998"/>
    </location>
</feature>
<feature type="compositionally biased region" description="Basic and acidic residues" evidence="4">
    <location>
        <begin position="1149"/>
        <end position="1161"/>
    </location>
</feature>
<feature type="compositionally biased region" description="Acidic residues" evidence="4">
    <location>
        <begin position="1480"/>
        <end position="1489"/>
    </location>
</feature>
<feature type="binding site" evidence="2">
    <location>
        <begin position="78"/>
        <end position="85"/>
    </location>
    <ligand>
        <name>ATP</name>
        <dbReference type="ChEBI" id="CHEBI:30616"/>
    </ligand>
</feature>
<feature type="mutagenesis site" description="Loss of ATPase and helicase activity." evidence="6">
    <original>K</original>
    <variation>M</variation>
    <location>
        <position position="84"/>
    </location>
</feature>
<feature type="sequence conflict" description="In Ref. 3; AGL96297." evidence="7" ref="3">
    <original>H</original>
    <variation>N</variation>
    <location>
        <position position="34"/>
    </location>
</feature>
<feature type="sequence conflict" description="In Ref. 3; AGL96297." evidence="7" ref="3">
    <original>V</original>
    <variation>I</variation>
    <location>
        <position position="153"/>
    </location>
</feature>
<feature type="sequence conflict" description="In Ref. 3; AGL96297." evidence="7" ref="3">
    <original>C</original>
    <variation>S</variation>
    <location>
        <position position="172"/>
    </location>
</feature>
<feature type="sequence conflict" description="In Ref. 3; AGL96297." evidence="7" ref="3">
    <original>A</original>
    <variation>S</variation>
    <location>
        <position position="195"/>
    </location>
</feature>
<feature type="sequence conflict" description="In Ref. 3; AGL96297." evidence="7" ref="3">
    <original>N</original>
    <variation>K</variation>
    <location>
        <position position="430"/>
    </location>
</feature>
<feature type="sequence conflict" description="In Ref. 3; AGL96297." evidence="7" ref="3">
    <original>A</original>
    <variation>S</variation>
    <location>
        <position position="614"/>
    </location>
</feature>
<feature type="sequence conflict" description="In Ref. 3; AGL96297." evidence="7" ref="3">
    <original>E</original>
    <variation>K</variation>
    <location>
        <position position="757"/>
    </location>
</feature>
<feature type="sequence conflict" description="In Ref. 3; AGL96297." evidence="7" ref="3">
    <original>EQ</original>
    <variation>DK</variation>
    <location>
        <begin position="824"/>
        <end position="825"/>
    </location>
</feature>
<feature type="sequence conflict" description="In Ref. 3; AGL96297." evidence="7" ref="3">
    <original>D</original>
    <variation>N</variation>
    <location>
        <position position="876"/>
    </location>
</feature>
<feature type="sequence conflict" description="In Ref. 3; AGL96297." evidence="7" ref="3">
    <original>F</original>
    <variation>S</variation>
    <location>
        <position position="918"/>
    </location>
</feature>
<feature type="sequence conflict" description="In Ref. 3; AGL96297." evidence="7" ref="3">
    <original>V</original>
    <variation>E</variation>
    <location>
        <position position="967"/>
    </location>
</feature>
<feature type="sequence conflict" description="In Ref. 3; AGL96297." evidence="7" ref="3">
    <original>P</original>
    <variation>S</variation>
    <location>
        <position position="978"/>
    </location>
</feature>
<feature type="sequence conflict" description="In Ref. 3; AGL96297." evidence="7" ref="3">
    <original>A</original>
    <variation>T</variation>
    <location>
        <position position="992"/>
    </location>
</feature>
<feature type="sequence conflict" description="In Ref. 3; AGL96297." evidence="7" ref="3">
    <original>E</original>
    <variation>K</variation>
    <location>
        <position position="997"/>
    </location>
</feature>
<feature type="sequence conflict" description="In Ref. 3; AGL96297." evidence="7" ref="3">
    <original>AVNK</original>
    <variation>PVNE</variation>
    <location>
        <begin position="1002"/>
        <end position="1005"/>
    </location>
</feature>
<feature type="sequence conflict" description="In Ref. 3; AGL96297." evidence="7" ref="3">
    <original>E</original>
    <variation>D</variation>
    <location>
        <position position="1036"/>
    </location>
</feature>
<feature type="sequence conflict" description="In Ref. 3; AGL96297." evidence="7" ref="3">
    <original>S</original>
    <variation>A</variation>
    <location>
        <position position="1063"/>
    </location>
</feature>
<feature type="sequence conflict" description="In Ref. 3; AGL96297." evidence="7" ref="3">
    <original>V</original>
    <variation>L</variation>
    <location>
        <position position="1068"/>
    </location>
</feature>
<feature type="sequence conflict" description="In Ref. 3; AGL96297." evidence="7" ref="3">
    <original>N</original>
    <variation>D</variation>
    <location>
        <position position="1088"/>
    </location>
</feature>
<feature type="sequence conflict" description="In Ref. 3; AGL96297." evidence="7" ref="3">
    <original>K</original>
    <variation>Q</variation>
    <location>
        <position position="1114"/>
    </location>
</feature>
<reference evidence="10" key="1">
    <citation type="journal article" date="2000" name="Science">
        <title>The genome sequence of Drosophila melanogaster.</title>
        <authorList>
            <person name="Adams M.D."/>
            <person name="Celniker S.E."/>
            <person name="Holt R.A."/>
            <person name="Evans C.A."/>
            <person name="Gocayne J.D."/>
            <person name="Amanatides P.G."/>
            <person name="Scherer S.E."/>
            <person name="Li P.W."/>
            <person name="Hoskins R.A."/>
            <person name="Galle R.F."/>
            <person name="George R.A."/>
            <person name="Lewis S.E."/>
            <person name="Richards S."/>
            <person name="Ashburner M."/>
            <person name="Henderson S.N."/>
            <person name="Sutton G.G."/>
            <person name="Wortman J.R."/>
            <person name="Yandell M.D."/>
            <person name="Zhang Q."/>
            <person name="Chen L.X."/>
            <person name="Brandon R.C."/>
            <person name="Rogers Y.-H.C."/>
            <person name="Blazej R.G."/>
            <person name="Champe M."/>
            <person name="Pfeiffer B.D."/>
            <person name="Wan K.H."/>
            <person name="Doyle C."/>
            <person name="Baxter E.G."/>
            <person name="Helt G."/>
            <person name="Nelson C.R."/>
            <person name="Miklos G.L.G."/>
            <person name="Abril J.F."/>
            <person name="Agbayani A."/>
            <person name="An H.-J."/>
            <person name="Andrews-Pfannkoch C."/>
            <person name="Baldwin D."/>
            <person name="Ballew R.M."/>
            <person name="Basu A."/>
            <person name="Baxendale J."/>
            <person name="Bayraktaroglu L."/>
            <person name="Beasley E.M."/>
            <person name="Beeson K.Y."/>
            <person name="Benos P.V."/>
            <person name="Berman B.P."/>
            <person name="Bhandari D."/>
            <person name="Bolshakov S."/>
            <person name="Borkova D."/>
            <person name="Botchan M.R."/>
            <person name="Bouck J."/>
            <person name="Brokstein P."/>
            <person name="Brottier P."/>
            <person name="Burtis K.C."/>
            <person name="Busam D.A."/>
            <person name="Butler H."/>
            <person name="Cadieu E."/>
            <person name="Center A."/>
            <person name="Chandra I."/>
            <person name="Cherry J.M."/>
            <person name="Cawley S."/>
            <person name="Dahlke C."/>
            <person name="Davenport L.B."/>
            <person name="Davies P."/>
            <person name="de Pablos B."/>
            <person name="Delcher A."/>
            <person name="Deng Z."/>
            <person name="Mays A.D."/>
            <person name="Dew I."/>
            <person name="Dietz S.M."/>
            <person name="Dodson K."/>
            <person name="Doup L.E."/>
            <person name="Downes M."/>
            <person name="Dugan-Rocha S."/>
            <person name="Dunkov B.C."/>
            <person name="Dunn P."/>
            <person name="Durbin K.J."/>
            <person name="Evangelista C.C."/>
            <person name="Ferraz C."/>
            <person name="Ferriera S."/>
            <person name="Fleischmann W."/>
            <person name="Fosler C."/>
            <person name="Gabrielian A.E."/>
            <person name="Garg N.S."/>
            <person name="Gelbart W.M."/>
            <person name="Glasser K."/>
            <person name="Glodek A."/>
            <person name="Gong F."/>
            <person name="Gorrell J.H."/>
            <person name="Gu Z."/>
            <person name="Guan P."/>
            <person name="Harris M."/>
            <person name="Harris N.L."/>
            <person name="Harvey D.A."/>
            <person name="Heiman T.J."/>
            <person name="Hernandez J.R."/>
            <person name="Houck J."/>
            <person name="Hostin D."/>
            <person name="Houston K.A."/>
            <person name="Howland T.J."/>
            <person name="Wei M.-H."/>
            <person name="Ibegwam C."/>
            <person name="Jalali M."/>
            <person name="Kalush F."/>
            <person name="Karpen G.H."/>
            <person name="Ke Z."/>
            <person name="Kennison J.A."/>
            <person name="Ketchum K.A."/>
            <person name="Kimmel B.E."/>
            <person name="Kodira C.D."/>
            <person name="Kraft C.L."/>
            <person name="Kravitz S."/>
            <person name="Kulp D."/>
            <person name="Lai Z."/>
            <person name="Lasko P."/>
            <person name="Lei Y."/>
            <person name="Levitsky A.A."/>
            <person name="Li J.H."/>
            <person name="Li Z."/>
            <person name="Liang Y."/>
            <person name="Lin X."/>
            <person name="Liu X."/>
            <person name="Mattei B."/>
            <person name="McIntosh T.C."/>
            <person name="McLeod M.P."/>
            <person name="McPherson D."/>
            <person name="Merkulov G."/>
            <person name="Milshina N.V."/>
            <person name="Mobarry C."/>
            <person name="Morris J."/>
            <person name="Moshrefi A."/>
            <person name="Mount S.M."/>
            <person name="Moy M."/>
            <person name="Murphy B."/>
            <person name="Murphy L."/>
            <person name="Muzny D.M."/>
            <person name="Nelson D.L."/>
            <person name="Nelson D.R."/>
            <person name="Nelson K.A."/>
            <person name="Nixon K."/>
            <person name="Nusskern D.R."/>
            <person name="Pacleb J.M."/>
            <person name="Palazzolo M."/>
            <person name="Pittman G.S."/>
            <person name="Pan S."/>
            <person name="Pollard J."/>
            <person name="Puri V."/>
            <person name="Reese M.G."/>
            <person name="Reinert K."/>
            <person name="Remington K."/>
            <person name="Saunders R.D.C."/>
            <person name="Scheeler F."/>
            <person name="Shen H."/>
            <person name="Shue B.C."/>
            <person name="Siden-Kiamos I."/>
            <person name="Simpson M."/>
            <person name="Skupski M.P."/>
            <person name="Smith T.J."/>
            <person name="Spier E."/>
            <person name="Spradling A.C."/>
            <person name="Stapleton M."/>
            <person name="Strong R."/>
            <person name="Sun E."/>
            <person name="Svirskas R."/>
            <person name="Tector C."/>
            <person name="Turner R."/>
            <person name="Venter E."/>
            <person name="Wang A.H."/>
            <person name="Wang X."/>
            <person name="Wang Z.-Y."/>
            <person name="Wassarman D.A."/>
            <person name="Weinstock G.M."/>
            <person name="Weissenbach J."/>
            <person name="Williams S.M."/>
            <person name="Woodage T."/>
            <person name="Worley K.C."/>
            <person name="Wu D."/>
            <person name="Yang S."/>
            <person name="Yao Q.A."/>
            <person name="Ye J."/>
            <person name="Yeh R.-F."/>
            <person name="Zaveri J.S."/>
            <person name="Zhan M."/>
            <person name="Zhang G."/>
            <person name="Zhao Q."/>
            <person name="Zheng L."/>
            <person name="Zheng X.H."/>
            <person name="Zhong F.N."/>
            <person name="Zhong W."/>
            <person name="Zhou X."/>
            <person name="Zhu S.C."/>
            <person name="Zhu X."/>
            <person name="Smith H.O."/>
            <person name="Gibbs R.A."/>
            <person name="Myers E.W."/>
            <person name="Rubin G.M."/>
            <person name="Venter J.C."/>
        </authorList>
    </citation>
    <scope>NUCLEOTIDE SEQUENCE [LARGE SCALE GENOMIC DNA]</scope>
    <source>
        <strain evidence="10">Berkeley</strain>
    </source>
</reference>
<reference evidence="10" key="2">
    <citation type="journal article" date="2002" name="Genome Biol.">
        <title>Annotation of the Drosophila melanogaster euchromatic genome: a systematic review.</title>
        <authorList>
            <person name="Misra S."/>
            <person name="Crosby M.A."/>
            <person name="Mungall C.J."/>
            <person name="Matthews B.B."/>
            <person name="Campbell K.S."/>
            <person name="Hradecky P."/>
            <person name="Huang Y."/>
            <person name="Kaminker J.S."/>
            <person name="Millburn G.H."/>
            <person name="Prochnik S.E."/>
            <person name="Smith C.D."/>
            <person name="Tupy J.L."/>
            <person name="Whitfield E.J."/>
            <person name="Bayraktaroglu L."/>
            <person name="Berman B.P."/>
            <person name="Bettencourt B.R."/>
            <person name="Celniker S.E."/>
            <person name="de Grey A.D.N.J."/>
            <person name="Drysdale R.A."/>
            <person name="Harris N.L."/>
            <person name="Richter J."/>
            <person name="Russo S."/>
            <person name="Schroeder A.J."/>
            <person name="Shu S.Q."/>
            <person name="Stapleton M."/>
            <person name="Yamada C."/>
            <person name="Ashburner M."/>
            <person name="Gelbart W.M."/>
            <person name="Rubin G.M."/>
            <person name="Lewis S.E."/>
        </authorList>
    </citation>
    <scope>GENOME REANNOTATION</scope>
    <source>
        <strain evidence="10">Berkeley</strain>
    </source>
</reference>
<reference evidence="8" key="3">
    <citation type="submission" date="2013-05" db="EMBL/GenBank/DDBJ databases">
        <authorList>
            <person name="Carlson J."/>
            <person name="Booth B."/>
            <person name="Frise E."/>
            <person name="Park S."/>
            <person name="Wan K."/>
            <person name="Yu C."/>
            <person name="Celniker S."/>
        </authorList>
    </citation>
    <scope>NUCLEOTIDE SEQUENCE [LARGE SCALE MRNA]</scope>
    <source>
        <strain evidence="10">Berkeley</strain>
        <tissue evidence="8">Testis</tissue>
    </source>
</reference>
<reference evidence="7" key="4">
    <citation type="journal article" date="2014" name="Genetics">
        <title>Drosophila FANCM helicase prevents spontaneous mitotic crossovers generated by the MUS81 and SLX1 nucleases.</title>
        <authorList>
            <person name="Kuo H.K."/>
            <person name="McMahan S."/>
            <person name="Rota C.M."/>
            <person name="Kohl K.P."/>
            <person name="Sekelsky J."/>
        </authorList>
    </citation>
    <scope>FUNCTION</scope>
    <scope>DISRUPTION PHENOTYPE</scope>
</reference>
<reference evidence="7" key="5">
    <citation type="journal article" date="2016" name="Genetics">
        <title>Biochemical Activities and Genetic Functions of the Drosophila melanogaster Fancm Helicase in DNA Repair.</title>
        <authorList>
            <person name="Romero N.E."/>
            <person name="Matson S.W."/>
            <person name="Sekelsky J."/>
        </authorList>
    </citation>
    <scope>FUNCTION</scope>
    <scope>CATALYTIC ACTIVITY</scope>
    <scope>DISRUPTION PHENOTYPE</scope>
    <scope>MUTAGENESIS OF LYS-84</scope>
</reference>
<dbReference type="EC" id="5.6.2.4" evidence="6"/>
<dbReference type="EMBL" id="AE014297">
    <property type="protein sequence ID" value="AAF55897.2"/>
    <property type="molecule type" value="Genomic_DNA"/>
</dbReference>
<dbReference type="EMBL" id="AE014297">
    <property type="protein sequence ID" value="AGB96186.1"/>
    <property type="molecule type" value="Genomic_DNA"/>
</dbReference>
<dbReference type="EMBL" id="BT150101">
    <property type="protein sequence ID" value="AGL96297.1"/>
    <property type="status" value="ALT_INIT"/>
    <property type="molecule type" value="mRNA"/>
</dbReference>
<dbReference type="RefSeq" id="NP_001262806.1">
    <property type="nucleotide sequence ID" value="NM_001275877.1"/>
</dbReference>
<dbReference type="RefSeq" id="NP_650971.2">
    <property type="nucleotide sequence ID" value="NM_142714.3"/>
</dbReference>
<dbReference type="SMR" id="Q9VDA0"/>
<dbReference type="FunCoup" id="Q9VDA0">
    <property type="interactions" value="570"/>
</dbReference>
<dbReference type="IntAct" id="Q9VDA0">
    <property type="interactions" value="9"/>
</dbReference>
<dbReference type="STRING" id="7227.FBpp0306724"/>
<dbReference type="GlyGen" id="Q9VDA0">
    <property type="glycosylation" value="1 site"/>
</dbReference>
<dbReference type="PaxDb" id="7227-FBpp0083508"/>
<dbReference type="EnsemblMetazoa" id="FBtr0084109">
    <property type="protein sequence ID" value="FBpp0083508"/>
    <property type="gene ID" value="FBgn0038889"/>
</dbReference>
<dbReference type="EnsemblMetazoa" id="FBtr0334662">
    <property type="protein sequence ID" value="FBpp0306724"/>
    <property type="gene ID" value="FBgn0038889"/>
</dbReference>
<dbReference type="GeneID" id="42543"/>
<dbReference type="KEGG" id="dme:Dmel_CG7922"/>
<dbReference type="UCSC" id="CG7922-RA">
    <property type="organism name" value="d. melanogaster"/>
</dbReference>
<dbReference type="AGR" id="FB:FBgn0038889"/>
<dbReference type="CTD" id="57697"/>
<dbReference type="FlyBase" id="FBgn0038889">
    <property type="gene designation" value="Fancm"/>
</dbReference>
<dbReference type="VEuPathDB" id="VectorBase:FBgn0038889"/>
<dbReference type="eggNOG" id="KOG0354">
    <property type="taxonomic scope" value="Eukaryota"/>
</dbReference>
<dbReference type="GeneTree" id="ENSGT00940000156480"/>
<dbReference type="HOGENOM" id="CLU_261996_0_0_1"/>
<dbReference type="InParanoid" id="Q9VDA0"/>
<dbReference type="OMA" id="DDHNDTN"/>
<dbReference type="OrthoDB" id="6513042at2759"/>
<dbReference type="BioGRID-ORCS" id="42543">
    <property type="hits" value="0 hits in 1 CRISPR screen"/>
</dbReference>
<dbReference type="GenomeRNAi" id="42543"/>
<dbReference type="PRO" id="PR:Q9VDA0"/>
<dbReference type="Proteomes" id="UP000000803">
    <property type="component" value="Chromosome 3R"/>
</dbReference>
<dbReference type="Bgee" id="FBgn0038889">
    <property type="expression patterns" value="Expressed in enterocyte of anterior adult midgut epithelium in digestive tract and 58 other cell types or tissues"/>
</dbReference>
<dbReference type="ExpressionAtlas" id="Q9VDA0">
    <property type="expression patterns" value="baseline and differential"/>
</dbReference>
<dbReference type="GO" id="GO:0005634">
    <property type="term" value="C:nucleus"/>
    <property type="evidence" value="ECO:0000250"/>
    <property type="project" value="FlyBase"/>
</dbReference>
<dbReference type="GO" id="GO:0043138">
    <property type="term" value="F:3'-5' DNA helicase activity"/>
    <property type="evidence" value="ECO:0000315"/>
    <property type="project" value="FlyBase"/>
</dbReference>
<dbReference type="GO" id="GO:0005524">
    <property type="term" value="F:ATP binding"/>
    <property type="evidence" value="ECO:0007669"/>
    <property type="project" value="UniProtKB-KW"/>
</dbReference>
<dbReference type="GO" id="GO:0000400">
    <property type="term" value="F:four-way junction DNA binding"/>
    <property type="evidence" value="ECO:0000318"/>
    <property type="project" value="GO_Central"/>
</dbReference>
<dbReference type="GO" id="GO:0009378">
    <property type="term" value="F:four-way junction helicase activity"/>
    <property type="evidence" value="ECO:0000318"/>
    <property type="project" value="GO_Central"/>
</dbReference>
<dbReference type="GO" id="GO:0016787">
    <property type="term" value="F:hydrolase activity"/>
    <property type="evidence" value="ECO:0007669"/>
    <property type="project" value="UniProtKB-KW"/>
</dbReference>
<dbReference type="GO" id="GO:0006281">
    <property type="term" value="P:DNA repair"/>
    <property type="evidence" value="ECO:0000315"/>
    <property type="project" value="FlyBase"/>
</dbReference>
<dbReference type="GO" id="GO:0006302">
    <property type="term" value="P:double-strand break repair"/>
    <property type="evidence" value="ECO:0000315"/>
    <property type="project" value="FlyBase"/>
</dbReference>
<dbReference type="GO" id="GO:0045003">
    <property type="term" value="P:double-strand break repair via synthesis-dependent strand annealing"/>
    <property type="evidence" value="ECO:0000315"/>
    <property type="project" value="FlyBase"/>
</dbReference>
<dbReference type="GO" id="GO:0035825">
    <property type="term" value="P:homologous recombination"/>
    <property type="evidence" value="ECO:0000315"/>
    <property type="project" value="FlyBase"/>
</dbReference>
<dbReference type="GO" id="GO:0036297">
    <property type="term" value="P:interstrand cross-link repair"/>
    <property type="evidence" value="ECO:0000318"/>
    <property type="project" value="GO_Central"/>
</dbReference>
<dbReference type="GO" id="GO:0045950">
    <property type="term" value="P:negative regulation of mitotic recombination"/>
    <property type="evidence" value="ECO:0000315"/>
    <property type="project" value="FlyBase"/>
</dbReference>
<dbReference type="GO" id="GO:0000725">
    <property type="term" value="P:recombinational repair"/>
    <property type="evidence" value="ECO:0000250"/>
    <property type="project" value="FlyBase"/>
</dbReference>
<dbReference type="CDD" id="cd18033">
    <property type="entry name" value="DEXDc_FANCM"/>
    <property type="match status" value="1"/>
</dbReference>
<dbReference type="CDD" id="cd12091">
    <property type="entry name" value="FANCM_ID"/>
    <property type="match status" value="1"/>
</dbReference>
<dbReference type="FunFam" id="3.40.50.300:FF:002583">
    <property type="entry name" value="ATP-dependent DNA helicase fml1"/>
    <property type="match status" value="1"/>
</dbReference>
<dbReference type="FunFam" id="1.20.1320.20:FF:000001">
    <property type="entry name" value="Fanconi anemia, complementation group M"/>
    <property type="match status" value="1"/>
</dbReference>
<dbReference type="FunFam" id="3.40.50.300:FF:000861">
    <property type="entry name" value="Fanconi anemia, complementation group M"/>
    <property type="match status" value="1"/>
</dbReference>
<dbReference type="Gene3D" id="1.20.1320.20">
    <property type="entry name" value="hef helicase domain"/>
    <property type="match status" value="1"/>
</dbReference>
<dbReference type="Gene3D" id="3.40.50.300">
    <property type="entry name" value="P-loop containing nucleotide triphosphate hydrolases"/>
    <property type="match status" value="2"/>
</dbReference>
<dbReference type="InterPro" id="IPR011545">
    <property type="entry name" value="DEAD/DEAH_box_helicase_dom"/>
</dbReference>
<dbReference type="InterPro" id="IPR039686">
    <property type="entry name" value="FANCM/Mph1-like_ID"/>
</dbReference>
<dbReference type="InterPro" id="IPR044749">
    <property type="entry name" value="FANCM_DEXDc"/>
</dbReference>
<dbReference type="InterPro" id="IPR014001">
    <property type="entry name" value="Helicase_ATP-bd"/>
</dbReference>
<dbReference type="InterPro" id="IPR001650">
    <property type="entry name" value="Helicase_C-like"/>
</dbReference>
<dbReference type="InterPro" id="IPR027417">
    <property type="entry name" value="P-loop_NTPase"/>
</dbReference>
<dbReference type="PANTHER" id="PTHR14025">
    <property type="entry name" value="FANCONI ANEMIA GROUP M FANCM FAMILY MEMBER"/>
    <property type="match status" value="1"/>
</dbReference>
<dbReference type="PANTHER" id="PTHR14025:SF20">
    <property type="entry name" value="FANCONI ANEMIA GROUP M PROTEIN"/>
    <property type="match status" value="1"/>
</dbReference>
<dbReference type="Pfam" id="PF00270">
    <property type="entry name" value="DEAD"/>
    <property type="match status" value="1"/>
</dbReference>
<dbReference type="Pfam" id="PF00271">
    <property type="entry name" value="Helicase_C"/>
    <property type="match status" value="1"/>
</dbReference>
<dbReference type="SMART" id="SM00487">
    <property type="entry name" value="DEXDc"/>
    <property type="match status" value="1"/>
</dbReference>
<dbReference type="SMART" id="SM00490">
    <property type="entry name" value="HELICc"/>
    <property type="match status" value="1"/>
</dbReference>
<dbReference type="SUPFAM" id="SSF52540">
    <property type="entry name" value="P-loop containing nucleoside triphosphate hydrolases"/>
    <property type="match status" value="1"/>
</dbReference>
<dbReference type="PROSITE" id="PS51192">
    <property type="entry name" value="HELICASE_ATP_BIND_1"/>
    <property type="match status" value="1"/>
</dbReference>
<dbReference type="PROSITE" id="PS51194">
    <property type="entry name" value="HELICASE_CTER"/>
    <property type="match status" value="1"/>
</dbReference>
<dbReference type="PROSITE" id="PS00430">
    <property type="entry name" value="TONB_DEPENDENT_REC_1"/>
    <property type="match status" value="1"/>
</dbReference>
<accession>Q9VDA0</accession>
<accession>R4SCI1</accession>